<evidence type="ECO:0000305" key="1"/>
<keyword id="KW-1185">Reference proteome</keyword>
<comment type="tissue specificity">
    <text>Widely expressed.</text>
</comment>
<comment type="caution">
    <text evidence="1">Product of a dubious gene prediction. Encoded in intron of ERC2.</text>
</comment>
<comment type="sequence caution" evidence="1">
    <conflict type="frameshift">
        <sequence resource="EMBL-CDS" id="AAC39932"/>
    </conflict>
</comment>
<proteinExistence type="uncertain"/>
<accession>O76042</accession>
<accession>Q6NT35</accession>
<protein>
    <recommendedName>
        <fullName>Putative uncharacterized protein encoded by ERC2-IT1</fullName>
    </recommendedName>
    <alternativeName>
        <fullName>ERC2 intronic transcript protein 1</fullName>
    </alternativeName>
    <alternativeName>
        <fullName>PO42</fullName>
    </alternativeName>
</protein>
<feature type="chain" id="PRO_0000089245" description="Putative uncharacterized protein encoded by ERC2-IT1">
    <location>
        <begin position="1"/>
        <end position="136"/>
    </location>
</feature>
<dbReference type="EMBL" id="U88965">
    <property type="protein sequence ID" value="AAC39932.1"/>
    <property type="status" value="ALT_FRAME"/>
    <property type="molecule type" value="mRNA"/>
</dbReference>
<dbReference type="EMBL" id="AC025572">
    <property type="status" value="NOT_ANNOTATED_CDS"/>
    <property type="molecule type" value="Genomic_DNA"/>
</dbReference>
<dbReference type="EMBL" id="CH471055">
    <property type="protein sequence ID" value="EAW65314.1"/>
    <property type="molecule type" value="Genomic_DNA"/>
</dbReference>
<dbReference type="EMBL" id="BC069453">
    <property type="status" value="NOT_ANNOTATED_CDS"/>
    <property type="molecule type" value="mRNA"/>
</dbReference>
<dbReference type="EMBL" id="BC074933">
    <property type="status" value="NOT_ANNOTATED_CDS"/>
    <property type="molecule type" value="mRNA"/>
</dbReference>
<dbReference type="EMBL" id="BC074934">
    <property type="status" value="NOT_ANNOTATED_CDS"/>
    <property type="molecule type" value="mRNA"/>
</dbReference>
<dbReference type="BioMuta" id="HGNC:1229"/>
<dbReference type="ProteomicsDB" id="50362"/>
<dbReference type="AGR" id="HGNC:1229"/>
<dbReference type="GeneCards" id="ERC2-IT1"/>
<dbReference type="HGNC" id="HGNC:1229">
    <property type="gene designation" value="ERC2-IT1"/>
</dbReference>
<dbReference type="neXtProt" id="NX_O76042"/>
<dbReference type="InParanoid" id="O76042"/>
<dbReference type="PAN-GO" id="O76042">
    <property type="GO annotations" value="0 GO annotations based on evolutionary models"/>
</dbReference>
<dbReference type="PathwayCommons" id="O76042"/>
<dbReference type="Pharos" id="O76042">
    <property type="development level" value="Tdark"/>
</dbReference>
<dbReference type="Proteomes" id="UP000005640">
    <property type="component" value="Unplaced"/>
</dbReference>
<dbReference type="RNAct" id="O76042">
    <property type="molecule type" value="protein"/>
</dbReference>
<name>ERIT1_HUMAN</name>
<sequence>MLACFPCFLRRKMPCLLKVADAGCSVGLGKVHCSCHLPNPRVLRHCDILTGVLTLGLDMSCHACLSAGTGLGEELVGLGPGSTCLVKHLWLLFPCHRLASQNYSDSLAQQWSFSLLIMWLCNREREIFMSKCAKCI</sequence>
<gene>
    <name type="primary">ERC2-IT1</name>
    <name type="synonym">C1orf1</name>
    <name type="synonym">C3orf51</name>
</gene>
<organism>
    <name type="scientific">Homo sapiens</name>
    <name type="common">Human</name>
    <dbReference type="NCBI Taxonomy" id="9606"/>
    <lineage>
        <taxon>Eukaryota</taxon>
        <taxon>Metazoa</taxon>
        <taxon>Chordata</taxon>
        <taxon>Craniata</taxon>
        <taxon>Vertebrata</taxon>
        <taxon>Euteleostomi</taxon>
        <taxon>Mammalia</taxon>
        <taxon>Eutheria</taxon>
        <taxon>Euarchontoglires</taxon>
        <taxon>Primates</taxon>
        <taxon>Haplorrhini</taxon>
        <taxon>Catarrhini</taxon>
        <taxon>Hominidae</taxon>
        <taxon>Homo</taxon>
    </lineage>
</organism>
<reference key="1">
    <citation type="journal article" date="1998" name="Genomics">
        <title>Molecular cloning and expression analysis of five novel genes in chromosome 1p36.</title>
        <authorList>
            <person name="Onyango P."/>
            <person name="Lubyova B."/>
            <person name="Gardellin P."/>
            <person name="Kurzbauer R."/>
            <person name="Weith A."/>
        </authorList>
    </citation>
    <scope>NUCLEOTIDE SEQUENCE [MRNA]</scope>
</reference>
<reference key="2">
    <citation type="journal article" date="2006" name="Nature">
        <title>The DNA sequence, annotation and analysis of human chromosome 3.</title>
        <authorList>
            <person name="Muzny D.M."/>
            <person name="Scherer S.E."/>
            <person name="Kaul R."/>
            <person name="Wang J."/>
            <person name="Yu J."/>
            <person name="Sudbrak R."/>
            <person name="Buhay C.J."/>
            <person name="Chen R."/>
            <person name="Cree A."/>
            <person name="Ding Y."/>
            <person name="Dugan-Rocha S."/>
            <person name="Gill R."/>
            <person name="Gunaratne P."/>
            <person name="Harris R.A."/>
            <person name="Hawes A.C."/>
            <person name="Hernandez J."/>
            <person name="Hodgson A.V."/>
            <person name="Hume J."/>
            <person name="Jackson A."/>
            <person name="Khan Z.M."/>
            <person name="Kovar-Smith C."/>
            <person name="Lewis L.R."/>
            <person name="Lozado R.J."/>
            <person name="Metzker M.L."/>
            <person name="Milosavljevic A."/>
            <person name="Miner G.R."/>
            <person name="Morgan M.B."/>
            <person name="Nazareth L.V."/>
            <person name="Scott G."/>
            <person name="Sodergren E."/>
            <person name="Song X.-Z."/>
            <person name="Steffen D."/>
            <person name="Wei S."/>
            <person name="Wheeler D.A."/>
            <person name="Wright M.W."/>
            <person name="Worley K.C."/>
            <person name="Yuan Y."/>
            <person name="Zhang Z."/>
            <person name="Adams C.Q."/>
            <person name="Ansari-Lari M.A."/>
            <person name="Ayele M."/>
            <person name="Brown M.J."/>
            <person name="Chen G."/>
            <person name="Chen Z."/>
            <person name="Clendenning J."/>
            <person name="Clerc-Blankenburg K.P."/>
            <person name="Chen R."/>
            <person name="Chen Z."/>
            <person name="Davis C."/>
            <person name="Delgado O."/>
            <person name="Dinh H.H."/>
            <person name="Dong W."/>
            <person name="Draper H."/>
            <person name="Ernst S."/>
            <person name="Fu G."/>
            <person name="Gonzalez-Garay M.L."/>
            <person name="Garcia D.K."/>
            <person name="Gillett W."/>
            <person name="Gu J."/>
            <person name="Hao B."/>
            <person name="Haugen E."/>
            <person name="Havlak P."/>
            <person name="He X."/>
            <person name="Hennig S."/>
            <person name="Hu S."/>
            <person name="Huang W."/>
            <person name="Jackson L.R."/>
            <person name="Jacob L.S."/>
            <person name="Kelly S.H."/>
            <person name="Kube M."/>
            <person name="Levy R."/>
            <person name="Li Z."/>
            <person name="Liu B."/>
            <person name="Liu J."/>
            <person name="Liu W."/>
            <person name="Lu J."/>
            <person name="Maheshwari M."/>
            <person name="Nguyen B.-V."/>
            <person name="Okwuonu G.O."/>
            <person name="Palmeiri A."/>
            <person name="Pasternak S."/>
            <person name="Perez L.M."/>
            <person name="Phelps K.A."/>
            <person name="Plopper F.J."/>
            <person name="Qiang B."/>
            <person name="Raymond C."/>
            <person name="Rodriguez R."/>
            <person name="Saenphimmachak C."/>
            <person name="Santibanez J."/>
            <person name="Shen H."/>
            <person name="Shen Y."/>
            <person name="Subramanian S."/>
            <person name="Tabor P.E."/>
            <person name="Verduzco D."/>
            <person name="Waldron L."/>
            <person name="Wang J."/>
            <person name="Wang J."/>
            <person name="Wang Q."/>
            <person name="Williams G.A."/>
            <person name="Wong G.K.-S."/>
            <person name="Yao Z."/>
            <person name="Zhang J."/>
            <person name="Zhang X."/>
            <person name="Zhao G."/>
            <person name="Zhou J."/>
            <person name="Zhou Y."/>
            <person name="Nelson D."/>
            <person name="Lehrach H."/>
            <person name="Reinhardt R."/>
            <person name="Naylor S.L."/>
            <person name="Yang H."/>
            <person name="Olson M."/>
            <person name="Weinstock G."/>
            <person name="Gibbs R.A."/>
        </authorList>
    </citation>
    <scope>NUCLEOTIDE SEQUENCE [LARGE SCALE GENOMIC DNA]</scope>
</reference>
<reference key="3">
    <citation type="submission" date="2005-07" db="EMBL/GenBank/DDBJ databases">
        <authorList>
            <person name="Mural R.J."/>
            <person name="Istrail S."/>
            <person name="Sutton G.G."/>
            <person name="Florea L."/>
            <person name="Halpern A.L."/>
            <person name="Mobarry C.M."/>
            <person name="Lippert R."/>
            <person name="Walenz B."/>
            <person name="Shatkay H."/>
            <person name="Dew I."/>
            <person name="Miller J.R."/>
            <person name="Flanigan M.J."/>
            <person name="Edwards N.J."/>
            <person name="Bolanos R."/>
            <person name="Fasulo D."/>
            <person name="Halldorsson B.V."/>
            <person name="Hannenhalli S."/>
            <person name="Turner R."/>
            <person name="Yooseph S."/>
            <person name="Lu F."/>
            <person name="Nusskern D.R."/>
            <person name="Shue B.C."/>
            <person name="Zheng X.H."/>
            <person name="Zhong F."/>
            <person name="Delcher A.L."/>
            <person name="Huson D.H."/>
            <person name="Kravitz S.A."/>
            <person name="Mouchard L."/>
            <person name="Reinert K."/>
            <person name="Remington K.A."/>
            <person name="Clark A.G."/>
            <person name="Waterman M.S."/>
            <person name="Eichler E.E."/>
            <person name="Adams M.D."/>
            <person name="Hunkapiller M.W."/>
            <person name="Myers E.W."/>
            <person name="Venter J.C."/>
        </authorList>
    </citation>
    <scope>NUCLEOTIDE SEQUENCE [LARGE SCALE GENOMIC DNA]</scope>
</reference>
<reference key="4">
    <citation type="journal article" date="2004" name="Genome Res.">
        <title>The status, quality, and expansion of the NIH full-length cDNA project: the Mammalian Gene Collection (MGC).</title>
        <authorList>
            <consortium name="The MGC Project Team"/>
        </authorList>
    </citation>
    <scope>NUCLEOTIDE SEQUENCE [LARGE SCALE MRNA]</scope>
</reference>